<evidence type="ECO:0000255" key="1">
    <source>
        <dbReference type="HAMAP-Rule" id="MF_00665"/>
    </source>
</evidence>
<evidence type="ECO:0000256" key="2">
    <source>
        <dbReference type="SAM" id="MobiDB-lite"/>
    </source>
</evidence>
<feature type="chain" id="PRO_1000147650" description="Small, acid-soluble spore protein O">
    <location>
        <begin position="1"/>
        <end position="49"/>
    </location>
</feature>
<feature type="region of interest" description="Disordered" evidence="2">
    <location>
        <begin position="1"/>
        <end position="49"/>
    </location>
</feature>
<feature type="compositionally biased region" description="Polar residues" evidence="2">
    <location>
        <begin position="8"/>
        <end position="20"/>
    </location>
</feature>
<name>SSPO_BACAC</name>
<gene>
    <name evidence="1" type="primary">sspO</name>
    <name type="ordered locus">BAMEG_0956</name>
</gene>
<dbReference type="EMBL" id="CP001215">
    <property type="protein sequence ID" value="ACP14823.1"/>
    <property type="molecule type" value="Genomic_DNA"/>
</dbReference>
<dbReference type="RefSeq" id="WP_000518052.1">
    <property type="nucleotide sequence ID" value="NC_012581.1"/>
</dbReference>
<dbReference type="GeneID" id="93007567"/>
<dbReference type="KEGG" id="bah:BAMEG_0956"/>
<dbReference type="HOGENOM" id="CLU_206342_0_0_9"/>
<dbReference type="GO" id="GO:0042601">
    <property type="term" value="C:endospore-forming forespore"/>
    <property type="evidence" value="ECO:0007669"/>
    <property type="project" value="InterPro"/>
</dbReference>
<dbReference type="GO" id="GO:0030436">
    <property type="term" value="P:asexual sporulation"/>
    <property type="evidence" value="ECO:0007669"/>
    <property type="project" value="UniProtKB-UniRule"/>
</dbReference>
<dbReference type="GO" id="GO:0030435">
    <property type="term" value="P:sporulation resulting in formation of a cellular spore"/>
    <property type="evidence" value="ECO:0007669"/>
    <property type="project" value="UniProtKB-KW"/>
</dbReference>
<dbReference type="HAMAP" id="MF_00665">
    <property type="entry name" value="SspO"/>
    <property type="match status" value="1"/>
</dbReference>
<dbReference type="InterPro" id="IPR012613">
    <property type="entry name" value="SASP_SspO"/>
</dbReference>
<dbReference type="NCBIfam" id="TIGR02864">
    <property type="entry name" value="spore_sspO"/>
    <property type="match status" value="1"/>
</dbReference>
<dbReference type="Pfam" id="PF08175">
    <property type="entry name" value="SspO"/>
    <property type="match status" value="1"/>
</dbReference>
<proteinExistence type="inferred from homology"/>
<keyword id="KW-0749">Sporulation</keyword>
<organism>
    <name type="scientific">Bacillus anthracis (strain CDC 684 / NRRL 3495)</name>
    <dbReference type="NCBI Taxonomy" id="568206"/>
    <lineage>
        <taxon>Bacteria</taxon>
        <taxon>Bacillati</taxon>
        <taxon>Bacillota</taxon>
        <taxon>Bacilli</taxon>
        <taxon>Bacillales</taxon>
        <taxon>Bacillaceae</taxon>
        <taxon>Bacillus</taxon>
        <taxon>Bacillus cereus group</taxon>
    </lineage>
</organism>
<sequence length="49" mass="5390">MGKRKANHTISGMNAASAQGQGAGYNEEFANENLTPAERQNNKKRKKNQ</sequence>
<reference key="1">
    <citation type="submission" date="2008-10" db="EMBL/GenBank/DDBJ databases">
        <title>Genome sequence of Bacillus anthracis str. CDC 684.</title>
        <authorList>
            <person name="Dodson R.J."/>
            <person name="Munk A.C."/>
            <person name="Brettin T."/>
            <person name="Bruce D."/>
            <person name="Detter C."/>
            <person name="Tapia R."/>
            <person name="Han C."/>
            <person name="Sutton G."/>
            <person name="Sims D."/>
        </authorList>
    </citation>
    <scope>NUCLEOTIDE SEQUENCE [LARGE SCALE GENOMIC DNA]</scope>
    <source>
        <strain>CDC 684 / NRRL 3495</strain>
    </source>
</reference>
<protein>
    <recommendedName>
        <fullName evidence="1">Small, acid-soluble spore protein O</fullName>
        <shortName evidence="1">SASP O</shortName>
    </recommendedName>
</protein>
<accession>C3L9B6</accession>
<comment type="subcellular location">
    <subcellularLocation>
        <location evidence="1">Spore core</location>
    </subcellularLocation>
</comment>
<comment type="induction">
    <text evidence="1">Expressed only in the forespore compartment of sporulating cells.</text>
</comment>
<comment type="similarity">
    <text evidence="1">Belongs to the SspO family.</text>
</comment>